<accession>P13137</accession>
<organism>
    <name type="scientific">Influenza A virus (strain A/Mallard/Alberta/88/1976 H3N8)</name>
    <dbReference type="NCBI Taxonomy" id="11430"/>
    <lineage>
        <taxon>Viruses</taxon>
        <taxon>Riboviria</taxon>
        <taxon>Orthornavirae</taxon>
        <taxon>Negarnaviricota</taxon>
        <taxon>Polyploviricotina</taxon>
        <taxon>Insthoviricetes</taxon>
        <taxon>Articulavirales</taxon>
        <taxon>Orthomyxoviridae</taxon>
        <taxon>Alphainfluenzavirus</taxon>
        <taxon>Alphainfluenzavirus influenzae</taxon>
        <taxon>Influenza A virus</taxon>
    </lineage>
</organism>
<evidence type="ECO:0000255" key="1">
    <source>
        <dbReference type="HAMAP-Rule" id="MF_04066"/>
    </source>
</evidence>
<evidence type="ECO:0000256" key="2">
    <source>
        <dbReference type="SAM" id="MobiDB-lite"/>
    </source>
</evidence>
<comment type="function">
    <text evidence="1">Inhibits post-transcriptional processing of cellular pre-mRNA, by binding and inhibiting two cellular proteins that are required for the 3'-end processing of cellular pre-mRNAs: the 30 kDa cleavage and polyadenylation specificity factor/CPSF4 and the poly(A)-binding protein 2/PABPN1. In turn, unprocessed 3' end pre-mRNAs accumulate in the host nucleus and are no longer exported to the cytoplasm. Cellular protein synthesis is thereby shut off very early after virus infection. Viral protein synthesis is not affected by the inhibition of the cellular 3' end processing machinery because the poly(A) tails of viral mRNAs are produced by the viral polymerase through a stuttering mechanism. Prevents the establishment of the cellular antiviral state by inhibiting TRIM25-mediated RIGI ubiquitination, which normally triggers the antiviral transduction signal that leads to the activation of type I IFN genes by transcription factors IRF3 and IRF7. Also binds poly(A) and U6 snRNA. Inhibits the integrated stress response (ISR) in the infected cell by blocking dsRNA binding by EIF2AK2/PKR and further phosphorylation of EIF2S1/EIF-2ALPHA. Stress granule formation is thus inhibited, which allows protein synthesis and viral replication.</text>
</comment>
<comment type="subunit">
    <text evidence="1">Homodimer. Interacts with host TRIM25 (via coiled coil); this interaction specifically inhibits TRIM25 multimerization and TRIM25-mediated RIGI CARD ubiquitination. Interacts with human EIF2AK2/PKR, CPSF4, IVNS1ABP and PABPN1.</text>
</comment>
<comment type="subcellular location">
    <subcellularLocation>
        <location evidence="1">Host nucleus</location>
    </subcellularLocation>
    <subcellularLocation>
        <location evidence="1">Host cytoplasm</location>
    </subcellularLocation>
    <text evidence="1">In uninfected, transfected cells, NS1 is localized in the nucleus. Only in virus infected cells, the nuclear export signal is unveiled, presumably by a viral protein, and a fraction of NS1 is exported in the cytoplasm.</text>
</comment>
<comment type="alternative products">
    <event type="alternative splicing"/>
    <isoform>
        <id>P13137-1</id>
        <name>NS1</name>
        <sequence type="displayed"/>
    </isoform>
    <isoform>
        <id>P13145-1</id>
        <name>NEP</name>
        <name>NS2</name>
        <sequence type="external"/>
    </isoform>
</comment>
<comment type="domain">
    <text evidence="1">The dsRNA-binding region is required for suppression of RNA silencing.</text>
</comment>
<comment type="PTM">
    <text evidence="1">Upon interferon induction, ISGylated via host HERC5; this results in the impairment of NS1 interaction with RNA targets due to its inability to form homodimers and to interact with host EIF2AK2/PKR.</text>
</comment>
<comment type="similarity">
    <text evidence="1">Belongs to the influenza A viruses NS1 family.</text>
</comment>
<gene>
    <name evidence="1" type="primary">NS</name>
</gene>
<keyword id="KW-0025">Alternative splicing</keyword>
<keyword id="KW-1262">Eukaryotic host gene expression shutoff by virus</keyword>
<keyword id="KW-1035">Host cytoplasm</keyword>
<keyword id="KW-1190">Host gene expression shutoff by virus</keyword>
<keyword id="KW-1192">Host mRNA suppression by virus</keyword>
<keyword id="KW-1048">Host nucleus</keyword>
<keyword id="KW-0945">Host-virus interaction</keyword>
<keyword id="KW-1090">Inhibition of host innate immune response by virus</keyword>
<keyword id="KW-1114">Inhibition of host interferon signaling pathway by virus</keyword>
<keyword id="KW-1102">Inhibition of host PKR by virus</keyword>
<keyword id="KW-1103">Inhibition of host pre-mRNA processing by virus</keyword>
<keyword id="KW-1088">Inhibition of host RIG-I by virus</keyword>
<keyword id="KW-1113">Inhibition of host RLR pathway by virus</keyword>
<keyword id="KW-0922">Interferon antiviral system evasion</keyword>
<keyword id="KW-0694">RNA-binding</keyword>
<keyword id="KW-0832">Ubl conjugation</keyword>
<keyword id="KW-0899">Viral immunoevasion</keyword>
<sequence length="230" mass="26021">MDSNTVTSFQVDCYLWHIRKLLSMRDMCDAPFDDRLRRDQKALKGRGSTLGLDLRVATMEGKKVVEDILKSETDENLKIAIASSPAPRYITDMSIEEISREWYMLMPRQKITGGLMVKMDQAIMDKRITLKANFSVLFDQLETLVSLRAFTDDGAIVAEISPIPSMPGHSTEDVKNAIGILIGGLEWNDNSIRASENIQRFAWGIRDENGGPPLPPKQKRYMARRVESEV</sequence>
<proteinExistence type="inferred from homology"/>
<feature type="chain" id="PRO_0000078936" description="Non-structural protein 1">
    <location>
        <begin position="1"/>
        <end position="230"/>
    </location>
</feature>
<feature type="region of interest" description="RNA-binding and homodimerization" evidence="1">
    <location>
        <begin position="1"/>
        <end position="73"/>
    </location>
</feature>
<feature type="region of interest" description="CPSF4-binding" evidence="1">
    <location>
        <begin position="180"/>
        <end position="215"/>
    </location>
</feature>
<feature type="region of interest" description="Disordered" evidence="2">
    <location>
        <begin position="209"/>
        <end position="230"/>
    </location>
</feature>
<feature type="region of interest" description="PABPN1-binding" evidence="1">
    <location>
        <begin position="223"/>
        <end position="230"/>
    </location>
</feature>
<feature type="short sequence motif" description="Nuclear localization signal" evidence="1">
    <location>
        <begin position="34"/>
        <end position="38"/>
    </location>
</feature>
<feature type="short sequence motif" description="Nuclear export signal" evidence="1">
    <location>
        <begin position="137"/>
        <end position="146"/>
    </location>
</feature>
<dbReference type="EMBL" id="M25373">
    <property type="protein sequence ID" value="AAA43531.1"/>
    <property type="molecule type" value="Genomic_RNA"/>
</dbReference>
<dbReference type="PIR" id="A32663">
    <property type="entry name" value="MNIVA5"/>
</dbReference>
<dbReference type="SMR" id="P13137"/>
<dbReference type="GO" id="GO:0030430">
    <property type="term" value="C:host cell cytoplasm"/>
    <property type="evidence" value="ECO:0007669"/>
    <property type="project" value="UniProtKB-SubCell"/>
</dbReference>
<dbReference type="GO" id="GO:0042025">
    <property type="term" value="C:host cell nucleus"/>
    <property type="evidence" value="ECO:0007669"/>
    <property type="project" value="UniProtKB-SubCell"/>
</dbReference>
<dbReference type="GO" id="GO:0030291">
    <property type="term" value="F:protein serine/threonine kinase inhibitor activity"/>
    <property type="evidence" value="ECO:0007669"/>
    <property type="project" value="UniProtKB-KW"/>
</dbReference>
<dbReference type="GO" id="GO:0003723">
    <property type="term" value="F:RNA binding"/>
    <property type="evidence" value="ECO:0007669"/>
    <property type="project" value="UniProtKB-KW"/>
</dbReference>
<dbReference type="GO" id="GO:0039540">
    <property type="term" value="P:symbiont-mediated suppression of host cytoplasmic pattern recognition receptor signaling pathway via inhibition of RIG-I activity"/>
    <property type="evidence" value="ECO:0007669"/>
    <property type="project" value="UniProtKB-KW"/>
</dbReference>
<dbReference type="GO" id="GO:0039657">
    <property type="term" value="P:symbiont-mediated suppression of host gene expression"/>
    <property type="evidence" value="ECO:0007669"/>
    <property type="project" value="UniProtKB-KW"/>
</dbReference>
<dbReference type="GO" id="GO:0039524">
    <property type="term" value="P:symbiont-mediated suppression of host mRNA processing"/>
    <property type="evidence" value="ECO:0007669"/>
    <property type="project" value="UniProtKB-KW"/>
</dbReference>
<dbReference type="GO" id="GO:0039580">
    <property type="term" value="P:symbiont-mediated suppression of host PKR/eIFalpha signaling"/>
    <property type="evidence" value="ECO:0007669"/>
    <property type="project" value="UniProtKB-KW"/>
</dbReference>
<dbReference type="GO" id="GO:0039502">
    <property type="term" value="P:symbiont-mediated suppression of host type I interferon-mediated signaling pathway"/>
    <property type="evidence" value="ECO:0007669"/>
    <property type="project" value="UniProtKB-KW"/>
</dbReference>
<dbReference type="Gene3D" id="3.30.420.330">
    <property type="entry name" value="Influenza virus non-structural protein, effector domain"/>
    <property type="match status" value="1"/>
</dbReference>
<dbReference type="Gene3D" id="1.10.287.10">
    <property type="entry name" value="S15/NS1, RNA-binding"/>
    <property type="match status" value="1"/>
</dbReference>
<dbReference type="HAMAP" id="MF_04066">
    <property type="entry name" value="INFV_NS1"/>
    <property type="match status" value="1"/>
</dbReference>
<dbReference type="InterPro" id="IPR004208">
    <property type="entry name" value="NS1"/>
</dbReference>
<dbReference type="InterPro" id="IPR000256">
    <property type="entry name" value="NS1A"/>
</dbReference>
<dbReference type="InterPro" id="IPR038064">
    <property type="entry name" value="NS1A_effect_dom-like_sf"/>
</dbReference>
<dbReference type="InterPro" id="IPR009068">
    <property type="entry name" value="uS15_NS1_RNA-bd_sf"/>
</dbReference>
<dbReference type="Pfam" id="PF00600">
    <property type="entry name" value="Flu_NS1"/>
    <property type="match status" value="1"/>
</dbReference>
<dbReference type="SUPFAM" id="SSF143021">
    <property type="entry name" value="Ns1 effector domain-like"/>
    <property type="match status" value="1"/>
</dbReference>
<dbReference type="SUPFAM" id="SSF47060">
    <property type="entry name" value="S15/NS1 RNA-binding domain"/>
    <property type="match status" value="1"/>
</dbReference>
<reference key="1">
    <citation type="journal article" date="1989" name="Virology">
        <title>The B allele of the NS gene of avian influenza viruses, but not the A allele, attenuates a human influenza A virus for squirrel monkeys.</title>
        <authorList>
            <person name="Treanor J.J."/>
            <person name="Snyder M.H."/>
            <person name="London W.T."/>
            <person name="Murphy B.R."/>
        </authorList>
    </citation>
    <scope>NUCLEOTIDE SEQUENCE [GENOMIC RNA]</scope>
</reference>
<reference key="2">
    <citation type="journal article" date="2003" name="Virology">
        <title>Intracellular warfare between human influenza viruses and human cells: the roles of the viral NS1 protein.</title>
        <authorList>
            <person name="Krug R.M."/>
            <person name="Yuan W."/>
            <person name="Noah D.L."/>
            <person name="Latham A.G."/>
        </authorList>
    </citation>
    <scope>REVIEW</scope>
</reference>
<organismHost>
    <name type="scientific">Aves</name>
    <dbReference type="NCBI Taxonomy" id="8782"/>
</organismHost>
<organismHost>
    <name type="scientific">Equus caballus</name>
    <name type="common">Horse</name>
    <dbReference type="NCBI Taxonomy" id="9796"/>
</organismHost>
<name>NS1_I76A5</name>
<protein>
    <recommendedName>
        <fullName evidence="1">Non-structural protein 1</fullName>
        <shortName evidence="1">NS1</shortName>
    </recommendedName>
    <alternativeName>
        <fullName evidence="1">NS1A</fullName>
    </alternativeName>
</protein>